<feature type="signal peptide" evidence="3">
    <location>
        <begin position="1"/>
        <end position="30"/>
    </location>
</feature>
<feature type="chain" id="PRO_5008422467" description="Pectinesterase inhibitor 6">
    <location>
        <begin position="31"/>
        <end position="208"/>
    </location>
</feature>
<feature type="glycosylation site" description="N-linked (GlcNAc...) asparagine" evidence="4">
    <location>
        <position position="54"/>
    </location>
</feature>
<feature type="glycosylation site" description="N-linked (GlcNAc...) asparagine" evidence="4">
    <location>
        <position position="75"/>
    </location>
</feature>
<feature type="disulfide bond" evidence="1">
    <location>
        <begin position="53"/>
        <end position="62"/>
    </location>
</feature>
<feature type="disulfide bond" evidence="1">
    <location>
        <begin position="118"/>
        <end position="165"/>
    </location>
</feature>
<feature type="sequence conflict" description="In Ref. 3; AAM63611." evidence="7" ref="3">
    <original>A</original>
    <variation>G</variation>
    <location>
        <position position="83"/>
    </location>
</feature>
<feature type="sequence conflict" description="In Ref. 3; AAM63611." evidence="7" ref="3">
    <original>V</original>
    <variation>M</variation>
    <location>
        <position position="95"/>
    </location>
</feature>
<feature type="sequence conflict" description="In Ref. 3; AAM63611." evidence="7" ref="3">
    <original>S</original>
    <variation>R</variation>
    <location>
        <position position="110"/>
    </location>
</feature>
<protein>
    <recommendedName>
        <fullName evidence="7">Pectinesterase inhibitor 6</fullName>
    </recommendedName>
    <alternativeName>
        <fullName evidence="6">Pectin methylesterase inhibitor 6</fullName>
        <shortName evidence="7">AtPMEI6</shortName>
    </alternativeName>
</protein>
<comment type="function">
    <text evidence="5">Pectin methylesterase (PME) inhibitor that targets PME from seeds and modulates PME activity and pectin methylesterification during seed germination. Promotes mucilage release by limiting methylesterification of homogalacturonan in seed coat epidermal cells.</text>
</comment>
<comment type="subcellular location">
    <subcellularLocation>
        <location evidence="2">Secreted</location>
        <location evidence="2">Extracellular space</location>
        <location evidence="2">Apoplast</location>
    </subcellularLocation>
</comment>
<comment type="similarity">
    <text evidence="7">Belongs to the PMEI family.</text>
</comment>
<gene>
    <name evidence="6" type="primary">PMEI6</name>
    <name evidence="8" type="ordered locus">At2g47670</name>
</gene>
<dbReference type="EMBL" id="AC002535">
    <property type="protein sequence ID" value="AAM14850.1"/>
    <property type="molecule type" value="Genomic_DNA"/>
</dbReference>
<dbReference type="EMBL" id="AC005309">
    <property type="protein sequence ID" value="AAC63623.1"/>
    <property type="molecule type" value="Genomic_DNA"/>
</dbReference>
<dbReference type="EMBL" id="CP002685">
    <property type="protein sequence ID" value="AEC10874.1"/>
    <property type="molecule type" value="Genomic_DNA"/>
</dbReference>
<dbReference type="EMBL" id="AY086547">
    <property type="protein sequence ID" value="AAM63611.1"/>
    <property type="molecule type" value="mRNA"/>
</dbReference>
<dbReference type="PIR" id="T00417">
    <property type="entry name" value="T00417"/>
</dbReference>
<dbReference type="RefSeq" id="NP_182289.1">
    <property type="nucleotide sequence ID" value="NM_130335.3"/>
</dbReference>
<dbReference type="SMR" id="O22244"/>
<dbReference type="FunCoup" id="O22244">
    <property type="interactions" value="106"/>
</dbReference>
<dbReference type="STRING" id="3702.O22244"/>
<dbReference type="GlyCosmos" id="O22244">
    <property type="glycosylation" value="2 sites, No reported glycans"/>
</dbReference>
<dbReference type="GlyGen" id="O22244">
    <property type="glycosylation" value="2 sites"/>
</dbReference>
<dbReference type="PaxDb" id="3702-AT2G47670.1"/>
<dbReference type="ProteomicsDB" id="234683"/>
<dbReference type="EnsemblPlants" id="AT2G47670.1">
    <property type="protein sequence ID" value="AT2G47670.1"/>
    <property type="gene ID" value="AT2G47670"/>
</dbReference>
<dbReference type="GeneID" id="819380"/>
<dbReference type="Gramene" id="AT2G47670.1">
    <property type="protein sequence ID" value="AT2G47670.1"/>
    <property type="gene ID" value="AT2G47670"/>
</dbReference>
<dbReference type="KEGG" id="ath:AT2G47670"/>
<dbReference type="Araport" id="AT2G47670"/>
<dbReference type="TAIR" id="AT2G47670">
    <property type="gene designation" value="PMEI6"/>
</dbReference>
<dbReference type="eggNOG" id="ENOG502S061">
    <property type="taxonomic scope" value="Eukaryota"/>
</dbReference>
<dbReference type="HOGENOM" id="CLU_033761_0_2_1"/>
<dbReference type="InParanoid" id="O22244"/>
<dbReference type="OMA" id="NAYKGYD"/>
<dbReference type="PhylomeDB" id="O22244"/>
<dbReference type="PRO" id="PR:O22244"/>
<dbReference type="Proteomes" id="UP000006548">
    <property type="component" value="Chromosome 2"/>
</dbReference>
<dbReference type="ExpressionAtlas" id="O22244">
    <property type="expression patterns" value="baseline and differential"/>
</dbReference>
<dbReference type="GO" id="GO:0048046">
    <property type="term" value="C:apoplast"/>
    <property type="evidence" value="ECO:0007669"/>
    <property type="project" value="UniProtKB-SubCell"/>
</dbReference>
<dbReference type="GO" id="GO:0046910">
    <property type="term" value="F:pectinesterase inhibitor activity"/>
    <property type="evidence" value="ECO:0000314"/>
    <property type="project" value="TAIR"/>
</dbReference>
<dbReference type="GO" id="GO:0009827">
    <property type="term" value="P:plant-type cell wall modification"/>
    <property type="evidence" value="ECO:0000315"/>
    <property type="project" value="TAIR"/>
</dbReference>
<dbReference type="GO" id="GO:0010214">
    <property type="term" value="P:seed coat development"/>
    <property type="evidence" value="ECO:0000315"/>
    <property type="project" value="TAIR"/>
</dbReference>
<dbReference type="CDD" id="cd15798">
    <property type="entry name" value="PMEI-like_3"/>
    <property type="match status" value="1"/>
</dbReference>
<dbReference type="Gene3D" id="1.20.140.40">
    <property type="entry name" value="Invertase/pectin methylesterase inhibitor family protein"/>
    <property type="match status" value="1"/>
</dbReference>
<dbReference type="InterPro" id="IPR035513">
    <property type="entry name" value="Invertase/methylesterase_inhib"/>
</dbReference>
<dbReference type="InterPro" id="IPR006501">
    <property type="entry name" value="Pectinesterase_inhib_dom"/>
</dbReference>
<dbReference type="InterPro" id="IPR051955">
    <property type="entry name" value="PME_Inhibitor"/>
</dbReference>
<dbReference type="NCBIfam" id="TIGR01614">
    <property type="entry name" value="PME_inhib"/>
    <property type="match status" value="1"/>
</dbReference>
<dbReference type="PANTHER" id="PTHR31080:SF86">
    <property type="entry name" value="PECTINESTERASE INHIBITOR 6"/>
    <property type="match status" value="1"/>
</dbReference>
<dbReference type="PANTHER" id="PTHR31080">
    <property type="entry name" value="PECTINESTERASE INHIBITOR-LIKE"/>
    <property type="match status" value="1"/>
</dbReference>
<dbReference type="Pfam" id="PF04043">
    <property type="entry name" value="PMEI"/>
    <property type="match status" value="1"/>
</dbReference>
<dbReference type="SMART" id="SM00856">
    <property type="entry name" value="PMEI"/>
    <property type="match status" value="1"/>
</dbReference>
<dbReference type="SUPFAM" id="SSF101148">
    <property type="entry name" value="Plant invertase/pectin methylesterase inhibitor"/>
    <property type="match status" value="1"/>
</dbReference>
<organism>
    <name type="scientific">Arabidopsis thaliana</name>
    <name type="common">Mouse-ear cress</name>
    <dbReference type="NCBI Taxonomy" id="3702"/>
    <lineage>
        <taxon>Eukaryota</taxon>
        <taxon>Viridiplantae</taxon>
        <taxon>Streptophyta</taxon>
        <taxon>Embryophyta</taxon>
        <taxon>Tracheophyta</taxon>
        <taxon>Spermatophyta</taxon>
        <taxon>Magnoliopsida</taxon>
        <taxon>eudicotyledons</taxon>
        <taxon>Gunneridae</taxon>
        <taxon>Pentapetalae</taxon>
        <taxon>rosids</taxon>
        <taxon>malvids</taxon>
        <taxon>Brassicales</taxon>
        <taxon>Brassicaceae</taxon>
        <taxon>Camelineae</taxon>
        <taxon>Arabidopsis</taxon>
    </lineage>
</organism>
<proteinExistence type="evidence at transcript level"/>
<keyword id="KW-0052">Apoplast</keyword>
<keyword id="KW-1015">Disulfide bond</keyword>
<keyword id="KW-0325">Glycoprotein</keyword>
<keyword id="KW-1185">Reference proteome</keyword>
<keyword id="KW-0964">Secreted</keyword>
<keyword id="KW-0732">Signal</keyword>
<accession>O22244</accession>
<accession>Q8LCK2</accession>
<sequence length="208" mass="23178">MTSSSSSPITFTLLLLLSLLVALNPNPSLASTGSNINTNDIVTQYSTYVRNACNVTRYNRLCVRTLWPFAIVARNNTSKWARASVAVTITDTKRVLRLLLKTQRSAVGESERIALSDCRELFVDSLDNLYKSLAVLRTLNADEFQRQISDLATWLSAALTDDDTCLDGFEETSSRTRTVRMVRRKATKCMRLCSNALALLKKLAFDGL</sequence>
<reference key="1">
    <citation type="journal article" date="1999" name="Nature">
        <title>Sequence and analysis of chromosome 2 of the plant Arabidopsis thaliana.</title>
        <authorList>
            <person name="Lin X."/>
            <person name="Kaul S."/>
            <person name="Rounsley S.D."/>
            <person name="Shea T.P."/>
            <person name="Benito M.-I."/>
            <person name="Town C.D."/>
            <person name="Fujii C.Y."/>
            <person name="Mason T.M."/>
            <person name="Bowman C.L."/>
            <person name="Barnstead M.E."/>
            <person name="Feldblyum T.V."/>
            <person name="Buell C.R."/>
            <person name="Ketchum K.A."/>
            <person name="Lee J.J."/>
            <person name="Ronning C.M."/>
            <person name="Koo H.L."/>
            <person name="Moffat K.S."/>
            <person name="Cronin L.A."/>
            <person name="Shen M."/>
            <person name="Pai G."/>
            <person name="Van Aken S."/>
            <person name="Umayam L."/>
            <person name="Tallon L.J."/>
            <person name="Gill J.E."/>
            <person name="Adams M.D."/>
            <person name="Carrera A.J."/>
            <person name="Creasy T.H."/>
            <person name="Goodman H.M."/>
            <person name="Somerville C.R."/>
            <person name="Copenhaver G.P."/>
            <person name="Preuss D."/>
            <person name="Nierman W.C."/>
            <person name="White O."/>
            <person name="Eisen J.A."/>
            <person name="Salzberg S.L."/>
            <person name="Fraser C.M."/>
            <person name="Venter J.C."/>
        </authorList>
    </citation>
    <scope>NUCLEOTIDE SEQUENCE [LARGE SCALE GENOMIC DNA]</scope>
    <source>
        <strain>cv. Columbia</strain>
    </source>
</reference>
<reference key="2">
    <citation type="journal article" date="2017" name="Plant J.">
        <title>Araport11: a complete reannotation of the Arabidopsis thaliana reference genome.</title>
        <authorList>
            <person name="Cheng C.Y."/>
            <person name="Krishnakumar V."/>
            <person name="Chan A.P."/>
            <person name="Thibaud-Nissen F."/>
            <person name="Schobel S."/>
            <person name="Town C.D."/>
        </authorList>
    </citation>
    <scope>GENOME REANNOTATION</scope>
    <source>
        <strain>cv. Columbia</strain>
    </source>
</reference>
<reference key="3">
    <citation type="submission" date="2002-03" db="EMBL/GenBank/DDBJ databases">
        <title>Full-length cDNA from Arabidopsis thaliana.</title>
        <authorList>
            <person name="Brover V.V."/>
            <person name="Troukhan M.E."/>
            <person name="Alexandrov N.A."/>
            <person name="Lu Y.-P."/>
            <person name="Flavell R.B."/>
            <person name="Feldmann K.A."/>
        </authorList>
    </citation>
    <scope>NUCLEOTIDE SEQUENCE [LARGE SCALE MRNA]</scope>
</reference>
<reference key="4">
    <citation type="journal article" date="2013" name="Plant Cell">
        <title>Pectin methylesterase inhibitor6 promotes Arabidopsis mucilage release by limiting methylesterification of homogalacturonan in seed coat epidermal cells.</title>
        <authorList>
            <person name="Saez-Aguayo S."/>
            <person name="Ralet M.C."/>
            <person name="Berger A."/>
            <person name="Botran L."/>
            <person name="Ropartz D."/>
            <person name="Marion-Poll A."/>
            <person name="North H.M."/>
        </authorList>
    </citation>
    <scope>FUNCTION</scope>
</reference>
<name>PMEI6_ARATH</name>
<evidence type="ECO:0000250" key="1">
    <source>
        <dbReference type="UniProtKB" id="Q9LNF2"/>
    </source>
</evidence>
<evidence type="ECO:0000250" key="2">
    <source>
        <dbReference type="UniProtKB" id="Q9STY5"/>
    </source>
</evidence>
<evidence type="ECO:0000255" key="3"/>
<evidence type="ECO:0000255" key="4">
    <source>
        <dbReference type="PROSITE-ProRule" id="PRU00498"/>
    </source>
</evidence>
<evidence type="ECO:0000269" key="5">
    <source>
    </source>
</evidence>
<evidence type="ECO:0000303" key="6">
    <source>
    </source>
</evidence>
<evidence type="ECO:0000305" key="7"/>
<evidence type="ECO:0000312" key="8">
    <source>
        <dbReference type="Araport" id="AT2G47670"/>
    </source>
</evidence>